<protein>
    <recommendedName>
        <fullName evidence="25">Procathepsin L</fullName>
        <ecNumber evidence="24">3.4.22.15</ecNumber>
    </recommendedName>
    <alternativeName>
        <fullName evidence="25">Cathepsin L1</fullName>
    </alternativeName>
    <alternativeName>
        <fullName>Major excreted protein</fullName>
        <shortName>MEP</shortName>
    </alternativeName>
    <component>
        <recommendedName>
            <fullName>Cathepsin L</fullName>
        </recommendedName>
    </component>
    <component>
        <recommendedName>
            <fullName>Cathepsin L heavy chain</fullName>
        </recommendedName>
    </component>
    <component>
        <recommendedName>
            <fullName>Cathepsin L light chain</fullName>
        </recommendedName>
    </component>
</protein>
<feature type="signal peptide" evidence="2">
    <location>
        <begin position="1"/>
        <end position="17"/>
    </location>
</feature>
<feature type="propeptide" id="PRO_0000026244" description="Activation peptide" evidence="24">
    <location>
        <begin position="18"/>
        <end position="113"/>
    </location>
</feature>
<feature type="chain" id="PRO_0000450791" description="Cathepsin L" evidence="24">
    <location>
        <begin position="114"/>
        <end position="333"/>
    </location>
</feature>
<feature type="chain" id="PRO_0000026245" description="Cathepsin L heavy chain">
    <location>
        <begin position="114"/>
        <end position="288"/>
    </location>
</feature>
<feature type="propeptide" id="PRO_0000026246">
    <location>
        <begin position="289"/>
        <end position="291"/>
    </location>
</feature>
<feature type="chain" id="PRO_0000026247" description="Cathepsin L light chain" evidence="21">
    <location>
        <begin position="292"/>
        <end position="333"/>
    </location>
</feature>
<feature type="active site" evidence="26">
    <location>
        <position position="138"/>
    </location>
</feature>
<feature type="active site">
    <location>
        <position position="276"/>
    </location>
</feature>
<feature type="active site">
    <location>
        <position position="300"/>
    </location>
</feature>
<feature type="binding site" evidence="22 31">
    <location>
        <position position="122"/>
    </location>
    <ligand>
        <name>Zn(2+)</name>
        <dbReference type="ChEBI" id="CHEBI:29105"/>
        <label>1</label>
    </ligand>
</feature>
<feature type="binding site" evidence="22 31">
    <location>
        <position position="163"/>
    </location>
    <ligand>
        <name>Zn(2+)</name>
        <dbReference type="ChEBI" id="CHEBI:29105"/>
        <label>2</label>
    </ligand>
</feature>
<feature type="binding site" evidence="22 31">
    <location>
        <position position="184"/>
    </location>
    <ligand>
        <name>Zn(2+)</name>
        <dbReference type="ChEBI" id="CHEBI:29105"/>
        <label>3</label>
    </ligand>
</feature>
<feature type="binding site" evidence="22 31">
    <location>
        <position position="199"/>
    </location>
    <ligand>
        <name>Zn(2+)</name>
        <dbReference type="ChEBI" id="CHEBI:29105"/>
        <label>2</label>
    </ligand>
</feature>
<feature type="binding site" evidence="22 31">
    <location>
        <position position="205"/>
    </location>
    <ligand>
        <name>Zn(2+)</name>
        <dbReference type="ChEBI" id="CHEBI:29105"/>
        <label>4</label>
    </ligand>
</feature>
<feature type="binding site" evidence="22 31">
    <location>
        <position position="209"/>
    </location>
    <ligand>
        <name>Zn(2+)</name>
        <dbReference type="ChEBI" id="CHEBI:29105"/>
        <label>4</label>
    </ligand>
</feature>
<feature type="binding site" evidence="22 31">
    <location>
        <position position="227"/>
    </location>
    <ligand>
        <name>Zn(2+)</name>
        <dbReference type="ChEBI" id="CHEBI:29105"/>
        <label>3</label>
    </ligand>
</feature>
<feature type="binding site" evidence="22 31">
    <location>
        <position position="250"/>
    </location>
    <ligand>
        <name>Zn(2+)</name>
        <dbReference type="ChEBI" id="CHEBI:29105"/>
        <label>5</label>
    </ligand>
</feature>
<feature type="binding site" evidence="22 31">
    <location>
        <position position="253"/>
    </location>
    <ligand>
        <name>Zn(2+)</name>
        <dbReference type="ChEBI" id="CHEBI:29105"/>
        <label>5</label>
    </ligand>
</feature>
<feature type="binding site" evidence="22 31">
    <location>
        <position position="273"/>
    </location>
    <ligand>
        <name>Zn(2+)</name>
        <dbReference type="ChEBI" id="CHEBI:29105"/>
        <label>6</label>
    </ligand>
</feature>
<feature type="binding site" evidence="22 31">
    <location>
        <position position="275"/>
    </location>
    <ligand>
        <name>Zn(2+)</name>
        <dbReference type="ChEBI" id="CHEBI:29105"/>
        <label>7</label>
    </ligand>
</feature>
<feature type="site" description="Cleavage; by autolysis" evidence="24">
    <location>
        <begin position="106"/>
        <end position="107"/>
    </location>
</feature>
<feature type="site" description="Cleavage; by autolysis" evidence="24">
    <location>
        <begin position="107"/>
        <end position="108"/>
    </location>
</feature>
<feature type="site" description="Cleavage; by autolysis" evidence="24">
    <location>
        <begin position="112"/>
        <end position="113"/>
    </location>
</feature>
<feature type="site" description="Cleavage; by autolysis" evidence="24">
    <location>
        <begin position="113"/>
        <end position="114"/>
    </location>
</feature>
<feature type="glycosylation site" description="N-linked (GlcNAc...) asparagine" evidence="8 11 14">
    <location>
        <position position="221"/>
    </location>
</feature>
<feature type="disulfide bond" evidence="23 28 29">
    <location>
        <begin position="135"/>
        <end position="178"/>
    </location>
</feature>
<feature type="disulfide bond" evidence="23 28 29">
    <location>
        <begin position="169"/>
        <end position="211"/>
    </location>
</feature>
<feature type="disulfide bond" description="Interchain (between heavy and light chains)" evidence="23 28 29">
    <location>
        <begin position="269"/>
        <end position="322"/>
    </location>
</feature>
<feature type="splice variant" id="VSP_060720" description="In isoform 2.">
    <location>
        <begin position="1"/>
        <end position="55"/>
    </location>
</feature>
<feature type="mutagenesis site" description="Catalytically inactive. Unable to autocleave procathepsin L." evidence="24">
    <original>C</original>
    <variation>S</variation>
    <location>
        <position position="138"/>
    </location>
</feature>
<feature type="sequence conflict" description="In Ref. 6; AAH12612." evidence="25" ref="6">
    <original>M</original>
    <variation>V</variation>
    <location>
        <position position="56"/>
    </location>
</feature>
<feature type="sequence conflict" description="In Ref. 7; AA sequence." evidence="25" ref="7">
    <original>D</original>
    <variation>N</variation>
    <location>
        <position position="268"/>
    </location>
</feature>
<feature type="helix" evidence="37">
    <location>
        <begin position="23"/>
        <end position="25"/>
    </location>
</feature>
<feature type="helix" evidence="37">
    <location>
        <begin position="26"/>
        <end position="35"/>
    </location>
</feature>
<feature type="turn" evidence="37">
    <location>
        <begin position="42"/>
        <end position="44"/>
    </location>
</feature>
<feature type="helix" evidence="37">
    <location>
        <begin position="45"/>
        <end position="67"/>
    </location>
</feature>
<feature type="strand" evidence="37">
    <location>
        <begin position="72"/>
        <end position="75"/>
    </location>
</feature>
<feature type="turn" evidence="37">
    <location>
        <begin position="79"/>
        <end position="82"/>
    </location>
</feature>
<feature type="helix" evidence="37">
    <location>
        <begin position="85"/>
        <end position="91"/>
    </location>
</feature>
<feature type="strand" evidence="37">
    <location>
        <begin position="103"/>
        <end position="105"/>
    </location>
</feature>
<feature type="strand" evidence="36">
    <location>
        <begin position="116"/>
        <end position="119"/>
    </location>
</feature>
<feature type="helix" evidence="32">
    <location>
        <begin position="120"/>
        <end position="123"/>
    </location>
</feature>
<feature type="strand" evidence="32">
    <location>
        <begin position="134"/>
        <end position="136"/>
    </location>
</feature>
<feature type="helix" evidence="32">
    <location>
        <begin position="138"/>
        <end position="155"/>
    </location>
</feature>
<feature type="helix" evidence="32">
    <location>
        <begin position="163"/>
        <end position="169"/>
    </location>
</feature>
<feature type="turn" evidence="32">
    <location>
        <begin position="171"/>
        <end position="174"/>
    </location>
</feature>
<feature type="helix" evidence="33">
    <location>
        <begin position="177"/>
        <end position="179"/>
    </location>
</feature>
<feature type="helix" evidence="32">
    <location>
        <begin position="183"/>
        <end position="193"/>
    </location>
</feature>
<feature type="strand" evidence="32">
    <location>
        <begin position="196"/>
        <end position="198"/>
    </location>
</feature>
<feature type="turn" evidence="32">
    <location>
        <begin position="199"/>
        <end position="201"/>
    </location>
</feature>
<feature type="helix" evidence="32">
    <location>
        <begin position="215"/>
        <end position="217"/>
    </location>
</feature>
<feature type="strand" evidence="32">
    <location>
        <begin position="218"/>
        <end position="220"/>
    </location>
</feature>
<feature type="strand" evidence="32">
    <location>
        <begin position="223"/>
        <end position="227"/>
    </location>
</feature>
<feature type="helix" evidence="32">
    <location>
        <begin position="232"/>
        <end position="241"/>
    </location>
</feature>
<feature type="strand" evidence="32">
    <location>
        <begin position="245"/>
        <end position="249"/>
    </location>
</feature>
<feature type="helix" evidence="32">
    <location>
        <begin position="254"/>
        <end position="257"/>
    </location>
</feature>
<feature type="strand" evidence="32">
    <location>
        <begin position="261"/>
        <end position="264"/>
    </location>
</feature>
<feature type="strand" evidence="34">
    <location>
        <begin position="271"/>
        <end position="273"/>
    </location>
</feature>
<feature type="strand" evidence="32">
    <location>
        <begin position="276"/>
        <end position="285"/>
    </location>
</feature>
<feature type="strand" evidence="32">
    <location>
        <begin position="289"/>
        <end position="291"/>
    </location>
</feature>
<feature type="strand" evidence="32">
    <location>
        <begin position="294"/>
        <end position="299"/>
    </location>
</feature>
<feature type="strand" evidence="35">
    <location>
        <begin position="304"/>
        <end position="306"/>
    </location>
</feature>
<feature type="turn" evidence="38">
    <location>
        <begin position="307"/>
        <end position="309"/>
    </location>
</feature>
<feature type="strand" evidence="32">
    <location>
        <begin position="311"/>
        <end position="315"/>
    </location>
</feature>
<feature type="strand" evidence="32">
    <location>
        <begin position="317"/>
        <end position="320"/>
    </location>
</feature>
<feature type="helix" evidence="32">
    <location>
        <begin position="321"/>
        <end position="323"/>
    </location>
</feature>
<feature type="turn" evidence="32">
    <location>
        <begin position="324"/>
        <end position="326"/>
    </location>
</feature>
<feature type="strand" evidence="32">
    <location>
        <begin position="329"/>
        <end position="332"/>
    </location>
</feature>
<proteinExistence type="evidence at protein level"/>
<name>CATL1_HUMAN</name>
<gene>
    <name evidence="27" type="primary">CTSL</name>
    <name type="synonym">CTSL1</name>
</gene>
<accession>P07711</accession>
<accession>Q6IAV1</accession>
<accession>Q96QJ0</accession>
<comment type="function">
    <text evidence="1 2 3 7 25">Thiol protease important for the overall degradation of proteins in lysosomes (Probable). Plays a critical for normal cellular functions such as general protein turnover, antigen processing and bone remodeling. Involved in the solubilization of cross-linked TG/thyroglobulin and in the subsequent release of thyroid hormone thyroxine (T4) by limited proteolysis of TG/thyroglobulin in the thyroid follicle lumen (By similarity). In neuroendocrine chromaffin cells secretory vesicles, catalyzes the prohormone proenkephalin processing to the active enkephalin peptide neurotransmitter (By similarity). In thymus, regulates CD4(+) T cell positive selection by generating the major histocompatibility complex class II (MHCII) bound peptide ligands presented by cortical thymic epithelial cells. Also mediates invariant chain processing in cortical thymic epithelial cells (By similarity). Major elastin-degrading enzyme at neutral pH. Accumulates as a mature and active enzyme in the extracellular space of antigen presenting cells (APCs) to regulate degradation of the extracellular matrix in the course of inflammation (By similarity). Secreted form generates endostatin from COL18A1 (PubMed:10716919). Critical for cardiac morphology and function. Plays an important role in hair follicle morphogenesis and cycling, as well as epidermal differentiation (By similarity). Required for maximal stimulation of steroidogenesis by TIMP1 (By similarity).</text>
</comment>
<comment type="function">
    <text evidence="10 12 13 15 17 18 20 22">(Microbial infection) In cells lacking TMPRSS2 expression, facilitates human coronaviruses SARS-CoV and SARS-CoV-2 infections via a slow acid-activated route with the proteolysis of coronavirus spike (S) glycoproteins in lysosome for entry into host cell (PubMed:16339146, PubMed:18562523, PubMed:32142651, PubMed:32221306, PubMed:37990007). Proteolysis within lysosomes is sufficient to activate membrane fusion by coronaviruses SARS-CoV and EMC (HCoV-EMC) S as well as Zaire ebolavirus glycoproteins (PubMed:16081529, PubMed:18562523, PubMed:26953343).</text>
</comment>
<comment type="function">
    <molecule>Isoform 2</molecule>
    <text evidence="9">Functions in the regulation of cell cycle progression through proteolytic processing of the CUX1 transcription factor (PubMed:15099520). Translation initiation at downstream start sites allows the synthesis of isoforms that are devoid of a signal peptide and localize to the nucleus where they cleave the CUX1 transcription factor and modify its DNA binding properties (PubMed:15099520).</text>
</comment>
<comment type="catalytic activity">
    <reaction evidence="22 24">
        <text>Specificity close to that of papain. As compared to cathepsin B, cathepsin L exhibits higher activity toward protein substrates, but has little activity on Z-Arg-Arg-NHMec, and no peptidyl-dipeptidase activity.</text>
        <dbReference type="EC" id="3.4.22.15"/>
    </reaction>
</comment>
<comment type="activity regulation">
    <text evidence="1 15 16 19 24">Inhibited by the propeptide produced by autocleavage (PubMed:9468501). Long isoform of CD74/Ii chain stabilizes the conformation of mature CTSL by binding to its active site and serving as a chaperone to help maintain a pool of mature enzyme in endocytic compartments and extracellular space of APCs. IFNG enhances the conversion into the CTSL mature and active form (By similarity). Inhibited by CST6. Inhibited by the glycopeptide antibiotic teicoplanin (PubMed:26953343). Inhibited by amantadine (PubMed:32361028).</text>
</comment>
<comment type="biophysicochemical properties">
    <phDependence>
        <text evidence="7 9 13 24">Optimum pH is 5.5, also active at pH 7.0 with CUX1 as substrate.</text>
    </phDependence>
</comment>
<comment type="subunit">
    <text evidence="1">Dimer of a heavy and a light chain linked by disulfide bonds. Interacts with Long isoform of CD74/Ii chain; the interaction stabilizes the conformation of mature CTSL.</text>
</comment>
<comment type="interaction">
    <interactant intactId="EBI-1220160">
        <id>P07711</id>
    </interactant>
    <interactant intactId="EBI-1549974">
        <id>O60911</id>
        <label>CTSV</label>
    </interactant>
    <organismsDiffer>false</organismsDiffer>
    <experiments>3</experiments>
</comment>
<comment type="interaction">
    <interactant intactId="EBI-1220160">
        <id>P07711</id>
    </interactant>
    <interactant intactId="EBI-347996">
        <id>O43765</id>
        <label>SGTA</label>
    </interactant>
    <organismsDiffer>false</organismsDiffer>
    <experiments>3</experiments>
</comment>
<comment type="interaction">
    <interactant intactId="EBI-1220160">
        <id>P07711</id>
    </interactant>
    <interactant intactId="EBI-25474821">
        <id>P0DTC2</id>
        <label>S</label>
    </interactant>
    <organismsDiffer>true</organismsDiffer>
    <experiments>3</experiments>
</comment>
<comment type="interaction">
    <interactant intactId="EBI-1220160">
        <id>P07711</id>
    </interactant>
    <interactant intactId="EBI-15582614">
        <id>P59594</id>
        <label>S</label>
    </interactant>
    <organismsDiffer>true</organismsDiffer>
    <experiments>2</experiments>
</comment>
<comment type="interaction">
    <interactant intactId="EBI-1220160">
        <id>P07711</id>
    </interactant>
    <interactant intactId="EBI-1549936">
        <id>G5EFH4</id>
        <label>srp-6</label>
    </interactant>
    <organismsDiffer>true</organismsDiffer>
    <experiments>2</experiments>
</comment>
<comment type="subcellular location">
    <subcellularLocation>
        <location evidence="1">Lysosome</location>
    </subcellularLocation>
    <subcellularLocation>
        <location evidence="1">Apical cell membrane</location>
        <topology evidence="1">Peripheral membrane protein</topology>
        <orientation evidence="1">Extracellular side</orientation>
    </subcellularLocation>
    <subcellularLocation>
        <location evidence="3">Cytoplasmic vesicle</location>
        <location evidence="3">Secretory vesicle</location>
        <location evidence="3">Chromaffin granule</location>
    </subcellularLocation>
    <subcellularLocation>
        <location evidence="1">Secreted</location>
        <location evidence="1">Extracellular space</location>
    </subcellularLocation>
    <subcellularLocation>
        <location evidence="1">Secreted</location>
    </subcellularLocation>
    <text evidence="1">Localizes to the apical membrane of thyroid epithelial cells. Released at extracellular space by activated dendritic cells and macrophages.</text>
</comment>
<comment type="subcellular location">
    <molecule>Isoform 2</molecule>
    <subcellularLocation>
        <location evidence="9">Nucleus</location>
    </subcellularLocation>
    <text evidence="9">Translation initiation at downstream start sites allows the synthesis of isoforms that are devoid of a signal peptide and do not transit through the endoplasmic reticulum to localize to the nucleus (PubMed:15099520). Nuclear location varies during the cell cycle, with higher levels during S phase (PubMed:15099520).</text>
</comment>
<comment type="alternative products">
    <event type="alternative initiation"/>
    <isoform>
        <id>P07711-1</id>
        <name>1</name>
        <sequence type="displayed"/>
    </isoform>
    <isoform>
        <id>P07711-3</id>
        <name>2</name>
        <sequence type="described" ref="VSP_060720"/>
    </isoform>
</comment>
<comment type="PTM">
    <text evidence="1 24">During export along the endocytic pathway, pro-CTSL undergoes several proteolytic cleavages to generate the CTSL single-chain and two-chain mature forms, composed of a heavy chain linked to a light chain by disulfide bonds (By similarity). Autocleavage; produces the single-chain CTSL after cleavage of the propeptide. The cleavage can be intermolecular (PubMed:9468501).</text>
</comment>
<comment type="similarity">
    <text evidence="4 5 6">Belongs to the peptidase C1 family.</text>
</comment>
<comment type="online information" name="Atlas of Genetics and Cytogenetics in Oncology and Haematology">
    <link uri="https://atlasgeneticsoncology.org/gene/40208/CTSL1"/>
</comment>
<keyword id="KW-0002">3D-structure</keyword>
<keyword id="KW-0024">Alternative initiation</keyword>
<keyword id="KW-1003">Cell membrane</keyword>
<keyword id="KW-0968">Cytoplasmic vesicle</keyword>
<keyword id="KW-0903">Direct protein sequencing</keyword>
<keyword id="KW-1015">Disulfide bond</keyword>
<keyword id="KW-0325">Glycoprotein</keyword>
<keyword id="KW-0945">Host-virus interaction</keyword>
<keyword id="KW-0378">Hydrolase</keyword>
<keyword id="KW-0458">Lysosome</keyword>
<keyword id="KW-0472">Membrane</keyword>
<keyword id="KW-0539">Nucleus</keyword>
<keyword id="KW-0645">Protease</keyword>
<keyword id="KW-1267">Proteomics identification</keyword>
<keyword id="KW-1185">Reference proteome</keyword>
<keyword id="KW-0964">Secreted</keyword>
<keyword id="KW-0732">Signal</keyword>
<keyword id="KW-0788">Thiol protease</keyword>
<keyword id="KW-0865">Zymogen</keyword>
<reference key="1">
    <citation type="journal article" date="1988" name="Biochem. J.">
        <title>Isolation and sequence of a cDNA for human pro-(cathepsin L).</title>
        <authorList>
            <person name="Gal S."/>
            <person name="Gottesman M.M."/>
        </authorList>
    </citation>
    <scope>NUCLEOTIDE SEQUENCE [MRNA]</scope>
</reference>
<reference key="2">
    <citation type="journal article" date="1988" name="J. Clin. Invest.">
        <title>Complete nucleotide and deduced amino acid sequences of human and murine preprocathepsin L. An abundant transcript induced by transformation of fibroblasts.</title>
        <authorList>
            <person name="Joseph L.J."/>
            <person name="Chang L.C."/>
            <person name="Stamenkovich D."/>
            <person name="Sukhatme V.P."/>
        </authorList>
    </citation>
    <scope>NUCLEOTIDE SEQUENCE [MRNA]</scope>
</reference>
<reference key="3">
    <citation type="submission" date="2004-06" db="EMBL/GenBank/DDBJ databases">
        <title>Cloning of human full open reading frames in Gateway(TM) system entry vector (pDONR201).</title>
        <authorList>
            <person name="Ebert L."/>
            <person name="Schick M."/>
            <person name="Neubert P."/>
            <person name="Schatten R."/>
            <person name="Henze S."/>
            <person name="Korn B."/>
        </authorList>
    </citation>
    <scope>NUCLEOTIDE SEQUENCE [LARGE SCALE MRNA]</scope>
</reference>
<reference key="4">
    <citation type="journal article" date="2007" name="BMC Genomics">
        <title>The full-ORF clone resource of the German cDNA consortium.</title>
        <authorList>
            <person name="Bechtel S."/>
            <person name="Rosenfelder H."/>
            <person name="Duda A."/>
            <person name="Schmidt C.P."/>
            <person name="Ernst U."/>
            <person name="Wellenreuther R."/>
            <person name="Mehrle A."/>
            <person name="Schuster C."/>
            <person name="Bahr A."/>
            <person name="Bloecker H."/>
            <person name="Heubner D."/>
            <person name="Hoerlein A."/>
            <person name="Michel G."/>
            <person name="Wedler H."/>
            <person name="Koehrer K."/>
            <person name="Ottenwaelder B."/>
            <person name="Poustka A."/>
            <person name="Wiemann S."/>
            <person name="Schupp I."/>
        </authorList>
    </citation>
    <scope>NUCLEOTIDE SEQUENCE [LARGE SCALE MRNA]</scope>
    <source>
        <tissue>Colon endothelium</tissue>
    </source>
</reference>
<reference key="5">
    <citation type="journal article" date="2004" name="Nature">
        <title>DNA sequence and analysis of human chromosome 9.</title>
        <authorList>
            <person name="Humphray S.J."/>
            <person name="Oliver K."/>
            <person name="Hunt A.R."/>
            <person name="Plumb R.W."/>
            <person name="Loveland J.E."/>
            <person name="Howe K.L."/>
            <person name="Andrews T.D."/>
            <person name="Searle S."/>
            <person name="Hunt S.E."/>
            <person name="Scott C.E."/>
            <person name="Jones M.C."/>
            <person name="Ainscough R."/>
            <person name="Almeida J.P."/>
            <person name="Ambrose K.D."/>
            <person name="Ashwell R.I.S."/>
            <person name="Babbage A.K."/>
            <person name="Babbage S."/>
            <person name="Bagguley C.L."/>
            <person name="Bailey J."/>
            <person name="Banerjee R."/>
            <person name="Barker D.J."/>
            <person name="Barlow K.F."/>
            <person name="Bates K."/>
            <person name="Beasley H."/>
            <person name="Beasley O."/>
            <person name="Bird C.P."/>
            <person name="Bray-Allen S."/>
            <person name="Brown A.J."/>
            <person name="Brown J.Y."/>
            <person name="Burford D."/>
            <person name="Burrill W."/>
            <person name="Burton J."/>
            <person name="Carder C."/>
            <person name="Carter N.P."/>
            <person name="Chapman J.C."/>
            <person name="Chen Y."/>
            <person name="Clarke G."/>
            <person name="Clark S.Y."/>
            <person name="Clee C.M."/>
            <person name="Clegg S."/>
            <person name="Collier R.E."/>
            <person name="Corby N."/>
            <person name="Crosier M."/>
            <person name="Cummings A.T."/>
            <person name="Davies J."/>
            <person name="Dhami P."/>
            <person name="Dunn M."/>
            <person name="Dutta I."/>
            <person name="Dyer L.W."/>
            <person name="Earthrowl M.E."/>
            <person name="Faulkner L."/>
            <person name="Fleming C.J."/>
            <person name="Frankish A."/>
            <person name="Frankland J.A."/>
            <person name="French L."/>
            <person name="Fricker D.G."/>
            <person name="Garner P."/>
            <person name="Garnett J."/>
            <person name="Ghori J."/>
            <person name="Gilbert J.G.R."/>
            <person name="Glison C."/>
            <person name="Grafham D.V."/>
            <person name="Gribble S."/>
            <person name="Griffiths C."/>
            <person name="Griffiths-Jones S."/>
            <person name="Grocock R."/>
            <person name="Guy J."/>
            <person name="Hall R.E."/>
            <person name="Hammond S."/>
            <person name="Harley J.L."/>
            <person name="Harrison E.S.I."/>
            <person name="Hart E.A."/>
            <person name="Heath P.D."/>
            <person name="Henderson C.D."/>
            <person name="Hopkins B.L."/>
            <person name="Howard P.J."/>
            <person name="Howden P.J."/>
            <person name="Huckle E."/>
            <person name="Johnson C."/>
            <person name="Johnson D."/>
            <person name="Joy A.A."/>
            <person name="Kay M."/>
            <person name="Keenan S."/>
            <person name="Kershaw J.K."/>
            <person name="Kimberley A.M."/>
            <person name="King A."/>
            <person name="Knights A."/>
            <person name="Laird G.K."/>
            <person name="Langford C."/>
            <person name="Lawlor S."/>
            <person name="Leongamornlert D.A."/>
            <person name="Leversha M."/>
            <person name="Lloyd C."/>
            <person name="Lloyd D.M."/>
            <person name="Lovell J."/>
            <person name="Martin S."/>
            <person name="Mashreghi-Mohammadi M."/>
            <person name="Matthews L."/>
            <person name="McLaren S."/>
            <person name="McLay K.E."/>
            <person name="McMurray A."/>
            <person name="Milne S."/>
            <person name="Nickerson T."/>
            <person name="Nisbett J."/>
            <person name="Nordsiek G."/>
            <person name="Pearce A.V."/>
            <person name="Peck A.I."/>
            <person name="Porter K.M."/>
            <person name="Pandian R."/>
            <person name="Pelan S."/>
            <person name="Phillimore B."/>
            <person name="Povey S."/>
            <person name="Ramsey Y."/>
            <person name="Rand V."/>
            <person name="Scharfe M."/>
            <person name="Sehra H.K."/>
            <person name="Shownkeen R."/>
            <person name="Sims S.K."/>
            <person name="Skuce C.D."/>
            <person name="Smith M."/>
            <person name="Steward C.A."/>
            <person name="Swarbreck D."/>
            <person name="Sycamore N."/>
            <person name="Tester J."/>
            <person name="Thorpe A."/>
            <person name="Tracey A."/>
            <person name="Tromans A."/>
            <person name="Thomas D.W."/>
            <person name="Wall M."/>
            <person name="Wallis J.M."/>
            <person name="West A.P."/>
            <person name="Whitehead S.L."/>
            <person name="Willey D.L."/>
            <person name="Williams S.A."/>
            <person name="Wilming L."/>
            <person name="Wray P.W."/>
            <person name="Young L."/>
            <person name="Ashurst J.L."/>
            <person name="Coulson A."/>
            <person name="Blocker H."/>
            <person name="Durbin R.M."/>
            <person name="Sulston J.E."/>
            <person name="Hubbard T."/>
            <person name="Jackson M.J."/>
            <person name="Bentley D.R."/>
            <person name="Beck S."/>
            <person name="Rogers J."/>
            <person name="Dunham I."/>
        </authorList>
    </citation>
    <scope>NUCLEOTIDE SEQUENCE [LARGE SCALE GENOMIC DNA]</scope>
</reference>
<reference key="6">
    <citation type="journal article" date="2004" name="Genome Res.">
        <title>The status, quality, and expansion of the NIH full-length cDNA project: the Mammalian Gene Collection (MGC).</title>
        <authorList>
            <consortium name="The MGC Project Team"/>
        </authorList>
    </citation>
    <scope>NUCLEOTIDE SEQUENCE [LARGE SCALE MRNA]</scope>
    <source>
        <tissue>Prostate</tissue>
    </source>
</reference>
<reference key="7">
    <citation type="journal article" date="1988" name="FEBS Lett.">
        <title>Amino acid sequences of the human kidney cathepsins H and L.</title>
        <authorList>
            <person name="Ritonja A."/>
            <person name="Popovic T."/>
            <person name="Kotnik M."/>
            <person name="Machleidt W."/>
            <person name="Turk V."/>
        </authorList>
    </citation>
    <scope>PROTEIN SEQUENCE OF 114-288 AND 292-333</scope>
</reference>
<reference key="8">
    <citation type="journal article" date="1987" name="Nucleic Acids Res.">
        <title>The major ras induced protein in NIH3T3 cells is cathepsin L.</title>
        <authorList>
            <person name="Joseph L.J."/>
            <person name="Lapid S."/>
            <person name="Sukhatme V.P."/>
        </authorList>
    </citation>
    <scope>NUCLEOTIDE SEQUENCE [MRNA] OF 113-154</scope>
</reference>
<reference key="9">
    <citation type="journal article" date="1986" name="Biochem. J.">
        <title>The N-terminal amino acid sequences of the heavy and light chains of human cathepsin L. Relationship to a cDNA clone for a major cysteine proteinase from a mouse macrophage cell line.</title>
        <authorList>
            <person name="Mason R.W."/>
            <person name="Walker J.E."/>
            <person name="Northrop F.D."/>
        </authorList>
    </citation>
    <scope>PROTEIN SEQUENCE OF 114-154 AND 292-333</scope>
</reference>
<reference key="10">
    <citation type="journal article" date="1998" name="J. Biol. Chem.">
        <title>Autocatalytic processing of recombinant human procathepsin L. Contribution of both intermolecular and unimolecular events in the processing of procathepsin L in vitro.</title>
        <authorList>
            <person name="Menard R."/>
            <person name="Carmona E."/>
            <person name="Takebe S."/>
            <person name="Dufour E."/>
            <person name="Plouffe C."/>
            <person name="Mason P."/>
            <person name="Mort J.S."/>
        </authorList>
    </citation>
    <scope>FUNCTION</scope>
    <scope>PROTEOLYTICAL CLEAVAGE</scope>
    <scope>MUTAGENESIS OF CYS-138</scope>
    <scope>CATALYTIC ACTIVITY</scope>
    <scope>BIOPHYSICOCHEMICAL PROPERTIES</scope>
    <scope>ACTIVITY REGULATION</scope>
    <scope>ACTIVE SITE</scope>
</reference>
<reference key="11">
    <citation type="journal article" date="2000" name="EMBO J.">
        <title>Secreted cathepsin L generates endostatin from collagen XVIII.</title>
        <authorList>
            <person name="Felbor U."/>
            <person name="Dreier L."/>
            <person name="Bryant R.A."/>
            <person name="Ploegh H.L."/>
            <person name="Olsen B.R."/>
            <person name="Mothes W."/>
        </authorList>
    </citation>
    <scope>FUNCTION</scope>
    <scope>BIOPHYSICOCHEMICAL PROPERTIES</scope>
</reference>
<reference key="12">
    <citation type="journal article" date="2003" name="Nat. Biotechnol.">
        <title>Identification and quantification of N-linked glycoproteins using hydrazide chemistry, stable isotope labeling and mass spectrometry.</title>
        <authorList>
            <person name="Zhang H."/>
            <person name="Li X.-J."/>
            <person name="Martin D.B."/>
            <person name="Aebersold R."/>
        </authorList>
    </citation>
    <scope>GLYCOSYLATION AT ASN-221</scope>
</reference>
<reference key="13">
    <citation type="journal article" date="2004" name="Mol. Cell">
        <title>A cathepsin L isoform that is devoid of a signal peptide localizes to the nucleus in S phase and processes the CDP/Cux transcription factor.</title>
        <authorList>
            <person name="Goulet B."/>
            <person name="Baruch A."/>
            <person name="Moon N.S."/>
            <person name="Poirier M."/>
            <person name="Sansregret L.L."/>
            <person name="Erickson A."/>
            <person name="Bogyo M."/>
            <person name="Nepveu A."/>
        </authorList>
    </citation>
    <scope>FUNCTION</scope>
    <scope>SUBCELLULAR LOCATION</scope>
    <scope>BIOPHYSICOCHEMICAL PROPERTIES</scope>
</reference>
<reference key="14">
    <citation type="journal article" date="2005" name="J. Proteome Res.">
        <title>Human plasma N-glycoproteome analysis by immunoaffinity subtraction, hydrazide chemistry, and mass spectrometry.</title>
        <authorList>
            <person name="Liu T."/>
            <person name="Qian W.-J."/>
            <person name="Gritsenko M.A."/>
            <person name="Camp D.G. II"/>
            <person name="Monroe M.E."/>
            <person name="Moore R.J."/>
            <person name="Smith R.D."/>
        </authorList>
    </citation>
    <scope>GLYCOSYLATION [LARGE SCALE ANALYSIS] AT ASN-221</scope>
    <source>
        <tissue>Plasma</tissue>
    </source>
</reference>
<reference key="15">
    <citation type="journal article" date="2005" name="Proc. Natl. Acad. Sci. U.S.A.">
        <title>Inhibitors of cathepsin L prevent severe acute respiratory syndrome coronavirus entry.</title>
        <authorList>
            <person name="Simmons G."/>
            <person name="Gosalia D.N."/>
            <person name="Rennekamp A.J."/>
            <person name="Reeves J.D."/>
            <person name="Diamond S.L."/>
            <person name="Bates P."/>
        </authorList>
    </citation>
    <scope>FUNCTION (MICROBIAL INFECTION)</scope>
</reference>
<reference key="16">
    <citation type="journal article" date="2006" name="J. Biol. Chem.">
        <title>SARS coronavirus, but not human coronavirus NL63, utilizes cathepsin L to infect ACE2-expressing cells.</title>
        <authorList>
            <person name="Huang I.C."/>
            <person name="Bosch B.J."/>
            <person name="Li F."/>
            <person name="Li W."/>
            <person name="Lee K.H."/>
            <person name="Ghiran S."/>
            <person name="Vasilieva N."/>
            <person name="Dermody T.S."/>
            <person name="Harrison S.C."/>
            <person name="Dormitzer P.R."/>
            <person name="Farzan M."/>
            <person name="Rottier P.J."/>
            <person name="Choe H."/>
        </authorList>
    </citation>
    <scope>FUNCTION (MICROBIAL INFECTION)</scope>
</reference>
<reference key="17">
    <citation type="journal article" date="2008" name="J. Virol.">
        <title>Cathepsin L functionally cleaves the severe acute respiratory syndrome coronavirus class I fusion protein upstream of rather than adjacent to the fusion peptide.</title>
        <authorList>
            <person name="Bosch B.J."/>
            <person name="Bartelink W."/>
            <person name="Rottier P.J."/>
        </authorList>
    </citation>
    <scope>FUNCTION (MICROBIAL INFECTION)</scope>
    <scope>BIOPHYSICOCHEMICAL PROPERTIES</scope>
</reference>
<reference key="18">
    <citation type="journal article" date="2009" name="J. Proteome Res.">
        <title>Glycoproteomics analysis of human liver tissue by combination of multiple enzyme digestion and hydrazide chemistry.</title>
        <authorList>
            <person name="Chen R."/>
            <person name="Jiang X."/>
            <person name="Sun D."/>
            <person name="Han G."/>
            <person name="Wang F."/>
            <person name="Ye M."/>
            <person name="Wang L."/>
            <person name="Zou H."/>
        </authorList>
    </citation>
    <scope>GLYCOSYLATION [LARGE SCALE ANALYSIS] AT ASN-221</scope>
    <source>
        <tissue>Liver</tissue>
    </source>
</reference>
<reference key="19">
    <citation type="journal article" date="2011" name="BMC Syst. Biol.">
        <title>Initial characterization of the human central proteome.</title>
        <authorList>
            <person name="Burkard T.R."/>
            <person name="Planyavsky M."/>
            <person name="Kaupe I."/>
            <person name="Breitwieser F.P."/>
            <person name="Buerckstuemmer T."/>
            <person name="Bennett K.L."/>
            <person name="Superti-Furga G."/>
            <person name="Colinge J."/>
        </authorList>
    </citation>
    <scope>IDENTIFICATION BY MASS SPECTROMETRY [LARGE SCALE ANALYSIS]</scope>
</reference>
<reference key="20">
    <citation type="journal article" date="2012" name="J. Proteome Res.">
        <title>Resveratrol-induced changes of the human adipocyte secretion profile.</title>
        <authorList>
            <person name="Rosenow A."/>
            <person name="Noben J.P."/>
            <person name="Jocken J."/>
            <person name="Kallendrusch S."/>
            <person name="Fischer-Posovszky P."/>
            <person name="Mariman E.C."/>
            <person name="Renes J."/>
        </authorList>
    </citation>
    <scope>IDENTIFICATION BY MASS SPECTROMETRY [LARGE SCALE ANALYSIS]</scope>
</reference>
<reference key="21">
    <citation type="journal article" date="2014" name="J. Proteomics">
        <title>An enzyme assisted RP-RPLC approach for in-depth analysis of human liver phosphoproteome.</title>
        <authorList>
            <person name="Bian Y."/>
            <person name="Song C."/>
            <person name="Cheng K."/>
            <person name="Dong M."/>
            <person name="Wang F."/>
            <person name="Huang J."/>
            <person name="Sun D."/>
            <person name="Wang L."/>
            <person name="Ye M."/>
            <person name="Zou H."/>
        </authorList>
    </citation>
    <scope>IDENTIFICATION BY MASS SPECTROMETRY [LARGE SCALE ANALYSIS]</scope>
    <source>
        <tissue>Liver</tissue>
    </source>
</reference>
<reference key="22">
    <citation type="journal article" date="2016" name="J. Biol. Chem.">
        <title>Glycopeptide Antibiotics Potently Inhibit Cathepsin L in the Late Endosome/Lysosome and Block the Entry of Ebola Virus, Middle East Respiratory Syndrome Coronavirus (MERS-CoV), and Severe Acute Respiratory Syndrome Coronavirus (SARS-CoV).</title>
        <authorList>
            <person name="Zhou N."/>
            <person name="Pan T."/>
            <person name="Zhang J."/>
            <person name="Li Q."/>
            <person name="Zhang X."/>
            <person name="Bai C."/>
            <person name="Huang F."/>
            <person name="Peng T."/>
            <person name="Zhang J."/>
            <person name="Liu C."/>
            <person name="Tao L."/>
            <person name="Zhang H."/>
        </authorList>
    </citation>
    <scope>FUNCTION (MICROBIAL INFECTION)</scope>
    <scope>ACTIVITY REGULATION</scope>
</reference>
<reference key="23">
    <citation type="journal article" date="2019" name="Genet. Med.">
        <title>Deficiency of the human cysteine protease inhibitor cystatin M/E causes hypotrichosis and dry skin.</title>
        <authorList>
            <person name="van den Bogaard E.H.J."/>
            <person name="van Geel M."/>
            <person name="van Vlijmen-Willems I.M.J.J."/>
            <person name="Jansen P.A.M."/>
            <person name="Peppelman M."/>
            <person name="van Erp P.E.J."/>
            <person name="Atalay S."/>
            <person name="Venselaar H."/>
            <person name="Simon M.E.H."/>
            <person name="Joosten M."/>
            <person name="Schalkwijk J."/>
            <person name="Zeeuwen P.L.J.M."/>
        </authorList>
    </citation>
    <scope>ACTIVITY REGULATION</scope>
</reference>
<reference key="24">
    <citation type="journal article" date="2020" name="Cell">
        <title>SARS-CoV-2 cell entry depends on ACE2 and TMPRSS2 and is blocked by a clinically proven protease inhibitor.</title>
        <authorList>
            <person name="Hoffmann M."/>
            <person name="Kleine-Weber H."/>
            <person name="Schroeder S."/>
            <person name="Krueger N."/>
            <person name="Herrler T."/>
            <person name="Erichsen S."/>
            <person name="Schiergens T.S."/>
            <person name="Herrler G."/>
            <person name="Wu N.H."/>
            <person name="Nitsche A."/>
            <person name="Mueller M.A."/>
            <person name="Drosten C."/>
            <person name="Poehlmann S."/>
        </authorList>
    </citation>
    <scope>FUNCTION (MICROBIAL INFECTION)</scope>
</reference>
<reference key="25">
    <citation type="journal article" date="2020" name="Int. J. Antimicrob. Agents">
        <title>Amantadine disrupts lysosomal gene expression: A hypothesis for COVID19 treatment.</title>
        <authorList>
            <person name="Smieszek S.P."/>
            <person name="Przychodzen B.P."/>
            <person name="Polymeropoulos M.H."/>
        </authorList>
    </citation>
    <scope>ACTIVITY REGULATION</scope>
</reference>
<reference key="26">
    <citation type="journal article" date="2020" name="Nat. Commun.">
        <title>Characterization of spike glycoprotein of SARS-CoV-2 on virus entry and its immune cross-reactivity with SARS-CoV.</title>
        <authorList>
            <person name="Ou X."/>
            <person name="Liu Y."/>
            <person name="Lei X."/>
            <person name="Li P."/>
            <person name="Mi D."/>
            <person name="Ren L."/>
            <person name="Guo L."/>
            <person name="Guo R."/>
            <person name="Chen T."/>
            <person name="Hu J."/>
            <person name="Xiang Z."/>
            <person name="Mu Z."/>
            <person name="Chen X."/>
            <person name="Chen J."/>
            <person name="Hu K."/>
            <person name="Jin Q."/>
            <person name="Wang J."/>
            <person name="Qian Z."/>
        </authorList>
    </citation>
    <scope>FUNCTION (MICROBIAL INFECTION)</scope>
</reference>
<reference key="27">
    <citation type="journal article" date="2020" name="Science">
        <title>MHC class II transactivator CIITA induces cell resistance to Ebola virus and SARS-like coronaviruses.</title>
        <authorList>
            <person name="Bruchez A."/>
            <person name="Sha K."/>
            <person name="Johnson J."/>
            <person name="Chen L."/>
            <person name="Stefani C."/>
            <person name="McConnell H."/>
            <person name="Gaucherand L."/>
            <person name="Prins R."/>
            <person name="Matreyek K.A."/>
            <person name="Hume A.J."/>
            <person name="Muehlberger E."/>
            <person name="Schmidt E.V."/>
            <person name="Olinger G.G."/>
            <person name="Stuart L.M."/>
            <person name="Lacy-Hulbert A."/>
        </authorList>
    </citation>
    <scope>FUNCTION (MICROBIAL INFECTION)</scope>
</reference>
<reference key="28">
    <citation type="journal article" date="2021" name="EMBO J.">
        <title>TMPRSS2 expression dictates the entry route used by SARS-CoV-2 to infect host cells.</title>
        <authorList>
            <person name="Koch J."/>
            <person name="Uckeley Z.M."/>
            <person name="Doldan P."/>
            <person name="Stanifer M."/>
            <person name="Boulant S."/>
            <person name="Lozach P.Y."/>
        </authorList>
    </citation>
    <scope>FUNCTION (MICROBIAL INFECTION)</scope>
</reference>
<reference evidence="28 29" key="29">
    <citation type="journal article" date="1996" name="EMBO J.">
        <title>Structure of human procathepsin L reveals the molecular basis of inhibition by the prosegment.</title>
        <authorList>
            <person name="Coulombe R."/>
            <person name="Grochulski P."/>
            <person name="Sivaraman J."/>
            <person name="Menard R."/>
            <person name="Mort J.S."/>
            <person name="Cygler M."/>
        </authorList>
    </citation>
    <scope>X-RAY CRYSTALLOGRAPHY (2.2 ANGSTROMS) OF 18-333</scope>
</reference>
<reference key="30">
    <citation type="journal article" date="1997" name="FEBS Lett.">
        <title>The crystal structure of human cathepsin L complexed with E-64.</title>
        <authorList>
            <person name="Fujishima A."/>
            <person name="Imai Y."/>
            <person name="Nomura T."/>
            <person name="Fujisawa Y."/>
            <person name="Yamamoto Y."/>
            <person name="Sugarawa T."/>
        </authorList>
    </citation>
    <scope>X-RAY CRYSTALLOGRAPHY (2.5 ANGSTROMS) OF 114-333</scope>
</reference>
<reference key="31">
    <citation type="submission" date="1999-08" db="PDB data bank">
        <authorList>
            <person name="Cygler M."/>
            <person name="Coulombe R."/>
        </authorList>
    </citation>
    <scope>X-RAY CRYSTALLOGRAPHY (1.8 ANGSTROMS) OF 18-333</scope>
</reference>
<reference evidence="30 31" key="32">
    <citation type="journal article" date="2023" name="Nat. Commun.">
        <title>Structure-based discovery of dual pathway inhibitors for SARS-CoV-2 entry.</title>
        <authorList>
            <person name="Wang H."/>
            <person name="Yang Q."/>
            <person name="Liu X."/>
            <person name="Xu Z."/>
            <person name="Shao M."/>
            <person name="Li D."/>
            <person name="Duan Y."/>
            <person name="Tang J."/>
            <person name="Yu X."/>
            <person name="Zhang Y."/>
            <person name="Hao A."/>
            <person name="Wang Y."/>
            <person name="Chen J."/>
            <person name="Zhu C."/>
            <person name="Guddat L."/>
            <person name="Chen H."/>
            <person name="Zhang L."/>
            <person name="Chen X."/>
            <person name="Jiang B."/>
            <person name="Sun L."/>
            <person name="Rao Z."/>
            <person name="Yang H."/>
        </authorList>
    </citation>
    <scope>X-RAY CRYSTALLOGRAPHY (2.0 ANGSTROMS) OF 114-333 IN COMPLEX WITH ZN(2+) AND INHIBITORS</scope>
    <scope>FUNCTION</scope>
    <scope>CATALYTIC ACTIVITY</scope>
</reference>
<sequence length="333" mass="37564">MNPTLILAAFCLGIASATLTFDHSLEAQWTKWKAMHNRLYGMNEEGWRRAVWEKNMKMIELHNQEYREGKHSFTMAMNAFGDMTSEEFRQVMNGFQNRKPRKGKVFQEPLFYEAPRSVDWREKGYVTPVKNQGQCGSCWAFSATGALEGQMFRKTGRLISLSEQNLVDCSGPQGNEGCNGGLMDYAFQYVQDNGGLDSEESYPYEATEESCKYNPKYSVANDTGFVDIPKQEKALMKAVATVGPISVAIDAGHESFLFYKEGIYFEPDCSSEDMDHGVLVVGYGFESTESDNNKYWLVKNSWGEEWGMGGYVKMAKDRRNHCGIASAASYPTV</sequence>
<dbReference type="EC" id="3.4.22.15" evidence="24"/>
<dbReference type="EMBL" id="X12451">
    <property type="protein sequence ID" value="CAA30981.1"/>
    <property type="molecule type" value="mRNA"/>
</dbReference>
<dbReference type="EMBL" id="M20496">
    <property type="protein sequence ID" value="AAA66974.1"/>
    <property type="molecule type" value="mRNA"/>
</dbReference>
<dbReference type="EMBL" id="CR457053">
    <property type="protein sequence ID" value="CAG33334.1"/>
    <property type="molecule type" value="mRNA"/>
</dbReference>
<dbReference type="EMBL" id="BX537395">
    <property type="protein sequence ID" value="CAD97637.1"/>
    <property type="molecule type" value="mRNA"/>
</dbReference>
<dbReference type="EMBL" id="AL160279">
    <property type="status" value="NOT_ANNOTATED_CDS"/>
    <property type="molecule type" value="Genomic_DNA"/>
</dbReference>
<dbReference type="EMBL" id="BC012612">
    <property type="protein sequence ID" value="AAH12612.1"/>
    <property type="molecule type" value="mRNA"/>
</dbReference>
<dbReference type="EMBL" id="X05256">
    <property type="protein sequence ID" value="CAA28877.1"/>
    <property type="molecule type" value="mRNA"/>
</dbReference>
<dbReference type="CCDS" id="CCDS6675.1">
    <molecule id="P07711-1"/>
</dbReference>
<dbReference type="CCDS" id="CCDS94433.1">
    <molecule id="P07711-3"/>
</dbReference>
<dbReference type="PIR" id="S01002">
    <property type="entry name" value="KHHUL"/>
</dbReference>
<dbReference type="RefSeq" id="NP_001244900.1">
    <molecule id="P07711-1"/>
    <property type="nucleotide sequence ID" value="NM_001257971.2"/>
</dbReference>
<dbReference type="RefSeq" id="NP_001244901.1">
    <molecule id="P07711-1"/>
    <property type="nucleotide sequence ID" value="NM_001257972.2"/>
</dbReference>
<dbReference type="RefSeq" id="NP_001369686.1">
    <molecule id="P07711-1"/>
    <property type="nucleotide sequence ID" value="NM_001382757.1"/>
</dbReference>
<dbReference type="RefSeq" id="NP_001369687.1">
    <molecule id="P07711-3"/>
    <property type="nucleotide sequence ID" value="NM_001382758.1"/>
</dbReference>
<dbReference type="RefSeq" id="NP_001903.1">
    <molecule id="P07711-1"/>
    <property type="nucleotide sequence ID" value="NM_001912.5"/>
</dbReference>
<dbReference type="RefSeq" id="NP_666023.1">
    <molecule id="P07711-1"/>
    <property type="nucleotide sequence ID" value="NM_145918.3"/>
</dbReference>
<dbReference type="RefSeq" id="XP_005251773.1">
    <property type="nucleotide sequence ID" value="XM_005251716.3"/>
</dbReference>
<dbReference type="PDB" id="1CJL">
    <property type="method" value="X-ray"/>
    <property type="resolution" value="2.20 A"/>
    <property type="chains" value="A=22-333"/>
</dbReference>
<dbReference type="PDB" id="1CS8">
    <property type="method" value="X-ray"/>
    <property type="resolution" value="1.80 A"/>
    <property type="chains" value="A=19-333"/>
</dbReference>
<dbReference type="PDB" id="1ICF">
    <property type="method" value="X-ray"/>
    <property type="resolution" value="2.00 A"/>
    <property type="chains" value="A/C=114-288, B/D=292-333"/>
</dbReference>
<dbReference type="PDB" id="1MHW">
    <property type="method" value="X-ray"/>
    <property type="resolution" value="1.90 A"/>
    <property type="chains" value="A/B=114-288, C/D=292-333"/>
</dbReference>
<dbReference type="PDB" id="2NQD">
    <property type="method" value="X-ray"/>
    <property type="resolution" value="1.75 A"/>
    <property type="chains" value="B=113-333"/>
</dbReference>
<dbReference type="PDB" id="2VHS">
    <property type="method" value="X-ray"/>
    <property type="resolution" value="1.50 A"/>
    <property type="chains" value="A/B/C/D=114-333"/>
</dbReference>
<dbReference type="PDB" id="2XU1">
    <property type="method" value="X-ray"/>
    <property type="resolution" value="1.45 A"/>
    <property type="chains" value="A/B/C/D=114-333"/>
</dbReference>
<dbReference type="PDB" id="2XU3">
    <property type="method" value="X-ray"/>
    <property type="resolution" value="0.90 A"/>
    <property type="chains" value="A=114-333"/>
</dbReference>
<dbReference type="PDB" id="2XU4">
    <property type="method" value="X-ray"/>
    <property type="resolution" value="1.12 A"/>
    <property type="chains" value="A=114-333"/>
</dbReference>
<dbReference type="PDB" id="2XU5">
    <property type="method" value="X-ray"/>
    <property type="resolution" value="1.60 A"/>
    <property type="chains" value="A=114-333"/>
</dbReference>
<dbReference type="PDB" id="2YJ2">
    <property type="method" value="X-ray"/>
    <property type="resolution" value="1.15 A"/>
    <property type="chains" value="A=114-333"/>
</dbReference>
<dbReference type="PDB" id="2YJ8">
    <property type="method" value="X-ray"/>
    <property type="resolution" value="1.30 A"/>
    <property type="chains" value="A=114-333"/>
</dbReference>
<dbReference type="PDB" id="2YJ9">
    <property type="method" value="X-ray"/>
    <property type="resolution" value="1.35 A"/>
    <property type="chains" value="A=114-333"/>
</dbReference>
<dbReference type="PDB" id="2YJB">
    <property type="method" value="X-ray"/>
    <property type="resolution" value="1.40 A"/>
    <property type="chains" value="A=114-333"/>
</dbReference>
<dbReference type="PDB" id="2YJC">
    <property type="method" value="X-ray"/>
    <property type="resolution" value="1.14 A"/>
    <property type="chains" value="A=114-333"/>
</dbReference>
<dbReference type="PDB" id="3BC3">
    <property type="method" value="X-ray"/>
    <property type="resolution" value="2.20 A"/>
    <property type="chains" value="A/B=114-333"/>
</dbReference>
<dbReference type="PDB" id="3H89">
    <property type="method" value="X-ray"/>
    <property type="resolution" value="2.50 A"/>
    <property type="chains" value="A/B/C/D/E/F=114-333"/>
</dbReference>
<dbReference type="PDB" id="3H8B">
    <property type="method" value="X-ray"/>
    <property type="resolution" value="1.80 A"/>
    <property type="chains" value="A/B/C/D/E/F=114-333"/>
</dbReference>
<dbReference type="PDB" id="3H8C">
    <property type="method" value="X-ray"/>
    <property type="resolution" value="2.50 A"/>
    <property type="chains" value="A/B=114-333"/>
</dbReference>
<dbReference type="PDB" id="3HHA">
    <property type="method" value="X-ray"/>
    <property type="resolution" value="1.27 A"/>
    <property type="chains" value="A/B/C/D=114-333"/>
</dbReference>
<dbReference type="PDB" id="3HWN">
    <property type="method" value="X-ray"/>
    <property type="resolution" value="2.33 A"/>
    <property type="chains" value="A/B/C/D=76-333"/>
</dbReference>
<dbReference type="PDB" id="3IV2">
    <property type="method" value="X-ray"/>
    <property type="resolution" value="2.20 A"/>
    <property type="chains" value="A/B=114-333"/>
</dbReference>
<dbReference type="PDB" id="3K24">
    <property type="method" value="X-ray"/>
    <property type="resolution" value="2.50 A"/>
    <property type="chains" value="A/B=114-333"/>
</dbReference>
<dbReference type="PDB" id="3KSE">
    <property type="method" value="X-ray"/>
    <property type="resolution" value="1.71 A"/>
    <property type="chains" value="A/B/C=114-333"/>
</dbReference>
<dbReference type="PDB" id="3OF8">
    <property type="method" value="X-ray"/>
    <property type="resolution" value="2.20 A"/>
    <property type="chains" value="A=113-333"/>
</dbReference>
<dbReference type="PDB" id="3OF9">
    <property type="method" value="X-ray"/>
    <property type="resolution" value="1.76 A"/>
    <property type="chains" value="A=113-333"/>
</dbReference>
<dbReference type="PDB" id="4AXL">
    <property type="method" value="X-ray"/>
    <property type="resolution" value="1.92 A"/>
    <property type="chains" value="A=114-333"/>
</dbReference>
<dbReference type="PDB" id="4AXM">
    <property type="method" value="X-ray"/>
    <property type="resolution" value="2.80 A"/>
    <property type="chains" value="A/B/F/I/L/O=114-333"/>
</dbReference>
<dbReference type="PDB" id="5F02">
    <property type="method" value="X-ray"/>
    <property type="resolution" value="1.43 A"/>
    <property type="chains" value="A=114-333"/>
</dbReference>
<dbReference type="PDB" id="5I4H">
    <property type="method" value="X-ray"/>
    <property type="resolution" value="1.42 A"/>
    <property type="chains" value="A=113-218, B=222-333"/>
</dbReference>
<dbReference type="PDB" id="5MAE">
    <property type="method" value="X-ray"/>
    <property type="resolution" value="1.00 A"/>
    <property type="chains" value="A=114-333"/>
</dbReference>
<dbReference type="PDB" id="5MAJ">
    <property type="method" value="X-ray"/>
    <property type="resolution" value="1.00 A"/>
    <property type="chains" value="A=114-333"/>
</dbReference>
<dbReference type="PDB" id="5MQY">
    <property type="method" value="X-ray"/>
    <property type="resolution" value="1.13 A"/>
    <property type="chains" value="A=114-333"/>
</dbReference>
<dbReference type="PDB" id="6EZP">
    <property type="method" value="X-ray"/>
    <property type="resolution" value="1.37 A"/>
    <property type="chains" value="A=114-333"/>
</dbReference>
<dbReference type="PDB" id="6EZX">
    <property type="method" value="X-ray"/>
    <property type="resolution" value="2.34 A"/>
    <property type="chains" value="A/B=114-333"/>
</dbReference>
<dbReference type="PDB" id="6F06">
    <property type="method" value="X-ray"/>
    <property type="resolution" value="2.02 A"/>
    <property type="chains" value="A/B=114-333"/>
</dbReference>
<dbReference type="PDB" id="6JD0">
    <property type="method" value="X-ray"/>
    <property type="resolution" value="1.80 A"/>
    <property type="chains" value="A=18-333"/>
</dbReference>
<dbReference type="PDB" id="6JD8">
    <property type="method" value="X-ray"/>
    <property type="resolution" value="1.46 A"/>
    <property type="chains" value="A=18-333"/>
</dbReference>
<dbReference type="PDB" id="7QKB">
    <property type="method" value="X-ray"/>
    <property type="resolution" value="1.80 A"/>
    <property type="chains" value="A/B/C/D=114-333"/>
</dbReference>
<dbReference type="PDB" id="7QKC">
    <property type="method" value="X-ray"/>
    <property type="resolution" value="1.69 A"/>
    <property type="chains" value="A/B/C/D=114-333"/>
</dbReference>
<dbReference type="PDB" id="7QKD">
    <property type="method" value="X-ray"/>
    <property type="resolution" value="1.50 A"/>
    <property type="chains" value="A/B/C/D=114-333"/>
</dbReference>
<dbReference type="PDB" id="7W33">
    <property type="method" value="X-ray"/>
    <property type="resolution" value="2.39 A"/>
    <property type="chains" value="A=1-333"/>
</dbReference>
<dbReference type="PDB" id="7W34">
    <property type="method" value="X-ray"/>
    <property type="resolution" value="2.89 A"/>
    <property type="chains" value="A=1-333"/>
</dbReference>
<dbReference type="PDB" id="7Z3T">
    <property type="method" value="X-ray"/>
    <property type="resolution" value="1.60 A"/>
    <property type="chains" value="A/B/C/D=114-333"/>
</dbReference>
<dbReference type="PDB" id="7Z58">
    <property type="method" value="X-ray"/>
    <property type="resolution" value="1.35 A"/>
    <property type="chains" value="A/B/C/D=114-333"/>
</dbReference>
<dbReference type="PDB" id="7ZS7">
    <property type="method" value="X-ray"/>
    <property type="resolution" value="1.60 A"/>
    <property type="chains" value="A/B/C/D=114-333"/>
</dbReference>
<dbReference type="PDB" id="7ZVF">
    <property type="method" value="X-ray"/>
    <property type="resolution" value="1.60 A"/>
    <property type="chains" value="A/B/C/D=114-333"/>
</dbReference>
<dbReference type="PDB" id="7ZXA">
    <property type="method" value="X-ray"/>
    <property type="resolution" value="1.60 A"/>
    <property type="chains" value="A/B/C/D=114-333"/>
</dbReference>
<dbReference type="PDB" id="8A4U">
    <property type="method" value="X-ray"/>
    <property type="resolution" value="1.90 A"/>
    <property type="chains" value="A/B/C/D=114-333"/>
</dbReference>
<dbReference type="PDB" id="8A4V">
    <property type="method" value="X-ray"/>
    <property type="resolution" value="1.65 A"/>
    <property type="chains" value="A/B/C/D=114-333"/>
</dbReference>
<dbReference type="PDB" id="8A4W">
    <property type="method" value="X-ray"/>
    <property type="resolution" value="1.40 A"/>
    <property type="chains" value="A/B/C/D=114-333"/>
</dbReference>
<dbReference type="PDB" id="8A4X">
    <property type="method" value="X-ray"/>
    <property type="resolution" value="1.80 A"/>
    <property type="chains" value="A/B/C/D=114-333"/>
</dbReference>
<dbReference type="PDB" id="8A5B">
    <property type="method" value="X-ray"/>
    <property type="resolution" value="1.80 A"/>
    <property type="chains" value="A/B/C/D=114-333"/>
</dbReference>
<dbReference type="PDB" id="8AHV">
    <property type="method" value="X-ray"/>
    <property type="resolution" value="1.70 A"/>
    <property type="chains" value="A/B/C/D=114-333"/>
</dbReference>
<dbReference type="PDB" id="8B4F">
    <property type="method" value="X-ray"/>
    <property type="resolution" value="1.90 A"/>
    <property type="chains" value="A/B/C/D=114-333"/>
</dbReference>
<dbReference type="PDB" id="8C77">
    <property type="method" value="X-ray"/>
    <property type="resolution" value="1.70 A"/>
    <property type="chains" value="A/B/C/D=114-333"/>
</dbReference>
<dbReference type="PDB" id="8GX2">
    <property type="method" value="X-ray"/>
    <property type="resolution" value="2.00 A"/>
    <property type="chains" value="A/B=1-333"/>
</dbReference>
<dbReference type="PDB" id="8HET">
    <property type="method" value="X-ray"/>
    <property type="resolution" value="2.00 A"/>
    <property type="chains" value="A=114-333"/>
</dbReference>
<dbReference type="PDB" id="8HFV">
    <property type="method" value="X-ray"/>
    <property type="resolution" value="2.10 A"/>
    <property type="chains" value="A/B/C/D=114-333"/>
</dbReference>
<dbReference type="PDB" id="8OFA">
    <property type="method" value="X-ray"/>
    <property type="resolution" value="1.90 A"/>
    <property type="chains" value="A/B/C/D=114-333"/>
</dbReference>
<dbReference type="PDB" id="8OZA">
    <property type="method" value="X-ray"/>
    <property type="resolution" value="1.80 A"/>
    <property type="chains" value="A/B/C/D=114-333"/>
</dbReference>
<dbReference type="PDB" id="8PRX">
    <property type="method" value="X-ray"/>
    <property type="resolution" value="1.80 A"/>
    <property type="chains" value="A/B/C/D=114-333"/>
</dbReference>
<dbReference type="PDB" id="8QKB">
    <property type="method" value="X-ray"/>
    <property type="resolution" value="1.60 A"/>
    <property type="chains" value="A/B/C/D=114-333"/>
</dbReference>
<dbReference type="PDB" id="8UAC">
    <property type="method" value="X-ray"/>
    <property type="resolution" value="1.40 A"/>
    <property type="chains" value="A/B=114-333"/>
</dbReference>
<dbReference type="PDBsum" id="1CJL"/>
<dbReference type="PDBsum" id="1CS8"/>
<dbReference type="PDBsum" id="1ICF"/>
<dbReference type="PDBsum" id="1MHW"/>
<dbReference type="PDBsum" id="2NQD"/>
<dbReference type="PDBsum" id="2VHS"/>
<dbReference type="PDBsum" id="2XU1"/>
<dbReference type="PDBsum" id="2XU3"/>
<dbReference type="PDBsum" id="2XU4"/>
<dbReference type="PDBsum" id="2XU5"/>
<dbReference type="PDBsum" id="2YJ2"/>
<dbReference type="PDBsum" id="2YJ8"/>
<dbReference type="PDBsum" id="2YJ9"/>
<dbReference type="PDBsum" id="2YJB"/>
<dbReference type="PDBsum" id="2YJC"/>
<dbReference type="PDBsum" id="3BC3"/>
<dbReference type="PDBsum" id="3H89"/>
<dbReference type="PDBsum" id="3H8B"/>
<dbReference type="PDBsum" id="3H8C"/>
<dbReference type="PDBsum" id="3HHA"/>
<dbReference type="PDBsum" id="3HWN"/>
<dbReference type="PDBsum" id="3IV2"/>
<dbReference type="PDBsum" id="3K24"/>
<dbReference type="PDBsum" id="3KSE"/>
<dbReference type="PDBsum" id="3OF8"/>
<dbReference type="PDBsum" id="3OF9"/>
<dbReference type="PDBsum" id="4AXL"/>
<dbReference type="PDBsum" id="4AXM"/>
<dbReference type="PDBsum" id="5F02"/>
<dbReference type="PDBsum" id="5I4H"/>
<dbReference type="PDBsum" id="5MAE"/>
<dbReference type="PDBsum" id="5MAJ"/>
<dbReference type="PDBsum" id="5MQY"/>
<dbReference type="PDBsum" id="6EZP"/>
<dbReference type="PDBsum" id="6EZX"/>
<dbReference type="PDBsum" id="6F06"/>
<dbReference type="PDBsum" id="6JD0"/>
<dbReference type="PDBsum" id="6JD8"/>
<dbReference type="PDBsum" id="7QKB"/>
<dbReference type="PDBsum" id="7QKC"/>
<dbReference type="PDBsum" id="7QKD"/>
<dbReference type="PDBsum" id="7W33"/>
<dbReference type="PDBsum" id="7W34"/>
<dbReference type="PDBsum" id="7Z3T"/>
<dbReference type="PDBsum" id="7Z58"/>
<dbReference type="PDBsum" id="7ZS7"/>
<dbReference type="PDBsum" id="7ZVF"/>
<dbReference type="PDBsum" id="7ZXA"/>
<dbReference type="PDBsum" id="8A4U"/>
<dbReference type="PDBsum" id="8A4V"/>
<dbReference type="PDBsum" id="8A4W"/>
<dbReference type="PDBsum" id="8A4X"/>
<dbReference type="PDBsum" id="8A5B"/>
<dbReference type="PDBsum" id="8AHV"/>
<dbReference type="PDBsum" id="8B4F"/>
<dbReference type="PDBsum" id="8C77"/>
<dbReference type="PDBsum" id="8GX2"/>
<dbReference type="PDBsum" id="8HET"/>
<dbReference type="PDBsum" id="8HFV"/>
<dbReference type="PDBsum" id="8OFA"/>
<dbReference type="PDBsum" id="8OZA"/>
<dbReference type="PDBsum" id="8PRX"/>
<dbReference type="PDBsum" id="8QKB"/>
<dbReference type="PDBsum" id="8UAC"/>
<dbReference type="SMR" id="P07711"/>
<dbReference type="BioGRID" id="107894">
    <property type="interactions" value="234"/>
</dbReference>
<dbReference type="CORUM" id="P07711"/>
<dbReference type="FunCoup" id="P07711">
    <property type="interactions" value="1134"/>
</dbReference>
<dbReference type="IntAct" id="P07711">
    <property type="interactions" value="33"/>
</dbReference>
<dbReference type="MINT" id="P07711"/>
<dbReference type="STRING" id="9606.ENSP00000345344"/>
<dbReference type="BindingDB" id="P07711"/>
<dbReference type="ChEMBL" id="CHEMBL3837"/>
<dbReference type="DrugBank" id="DB07593">
    <property type="generic name" value="1-(PHENYLMETHYL)CYCLOPENTYL[(1S)-1-FORMYLPENTYL]CARBAMATE"/>
</dbReference>
<dbReference type="DrugBank" id="DB07477">
    <property type="generic name" value="Felbinac"/>
</dbReference>
<dbReference type="DrugBank" id="DB12010">
    <property type="generic name" value="Fostamatinib"/>
</dbReference>
<dbReference type="DrugBank" id="DB03661">
    <property type="generic name" value="L-cysteic acid"/>
</dbReference>
<dbReference type="DrugBank" id="DB14962">
    <property type="generic name" value="Trastuzumab deruxtecan"/>
</dbReference>
<dbReference type="DrugCentral" id="P07711"/>
<dbReference type="GuidetoPHARMACOLOGY" id="2351"/>
<dbReference type="MEROPS" id="C01.032"/>
<dbReference type="MEROPS" id="I29.001"/>
<dbReference type="GlyConnect" id="1081">
    <property type="glycosylation" value="12 N-Linked glycans (1 site)"/>
</dbReference>
<dbReference type="GlyCosmos" id="P07711">
    <property type="glycosylation" value="2 sites, 14 glycans"/>
</dbReference>
<dbReference type="GlyGen" id="P07711">
    <property type="glycosylation" value="7 sites, 23 N-linked glycans (1 site), 1 O-linked glycan (1 site)"/>
</dbReference>
<dbReference type="iPTMnet" id="P07711"/>
<dbReference type="PhosphoSitePlus" id="P07711"/>
<dbReference type="BioMuta" id="CTSL"/>
<dbReference type="DMDM" id="115741"/>
<dbReference type="jPOST" id="P07711"/>
<dbReference type="MassIVE" id="P07711"/>
<dbReference type="PaxDb" id="9606-ENSP00000345344"/>
<dbReference type="PeptideAtlas" id="P07711"/>
<dbReference type="ProteomicsDB" id="52023"/>
<dbReference type="Pumba" id="P07711"/>
<dbReference type="ABCD" id="P07711">
    <property type="antibodies" value="1 sequenced antibody"/>
</dbReference>
<dbReference type="Antibodypedia" id="4374">
    <property type="antibodies" value="682 antibodies from 40 providers"/>
</dbReference>
<dbReference type="DNASU" id="1514"/>
<dbReference type="Ensembl" id="ENST00000340342.11">
    <molecule id="P07711-1"/>
    <property type="protein sequence ID" value="ENSP00000365061.5"/>
    <property type="gene ID" value="ENSG00000135047.16"/>
</dbReference>
<dbReference type="Ensembl" id="ENST00000343150.10">
    <molecule id="P07711-1"/>
    <property type="protein sequence ID" value="ENSP00000345344.5"/>
    <property type="gene ID" value="ENSG00000135047.16"/>
</dbReference>
<dbReference type="Ensembl" id="ENST00000676480.1">
    <molecule id="P07711-1"/>
    <property type="protein sequence ID" value="ENSP00000504279.1"/>
    <property type="gene ID" value="ENSG00000135047.16"/>
</dbReference>
<dbReference type="Ensembl" id="ENST00000676531.1">
    <molecule id="P07711-1"/>
    <property type="protein sequence ID" value="ENSP00000503439.1"/>
    <property type="gene ID" value="ENSG00000135047.16"/>
</dbReference>
<dbReference type="Ensembl" id="ENST00000676769.1">
    <molecule id="P07711-3"/>
    <property type="protein sequence ID" value="ENSP00000504405.1"/>
    <property type="gene ID" value="ENSG00000135047.16"/>
</dbReference>
<dbReference type="Ensembl" id="ENST00000676881.1">
    <molecule id="P07711-1"/>
    <property type="protein sequence ID" value="ENSP00000502901.1"/>
    <property type="gene ID" value="ENSG00000135047.16"/>
</dbReference>
<dbReference type="Ensembl" id="ENST00000676946.1">
    <molecule id="P07711-1"/>
    <property type="protein sequence ID" value="ENSP00000503470.1"/>
    <property type="gene ID" value="ENSG00000135047.16"/>
</dbReference>
<dbReference type="Ensembl" id="ENST00000677019.1">
    <molecule id="P07711-3"/>
    <property type="protein sequence ID" value="ENSP00000504473.1"/>
    <property type="gene ID" value="ENSG00000135047.16"/>
</dbReference>
<dbReference type="Ensembl" id="ENST00000677262.1">
    <molecule id="P07711-1"/>
    <property type="protein sequence ID" value="ENSP00000503851.1"/>
    <property type="gene ID" value="ENSG00000135047.16"/>
</dbReference>
<dbReference type="Ensembl" id="ENST00000677761.1">
    <molecule id="P07711-1"/>
    <property type="protein sequence ID" value="ENSP00000503938.1"/>
    <property type="gene ID" value="ENSG00000135047.16"/>
</dbReference>
<dbReference type="Ensembl" id="ENST00000677821.1">
    <molecule id="P07711-1"/>
    <property type="protein sequence ID" value="ENSP00000503298.1"/>
    <property type="gene ID" value="ENSG00000135047.16"/>
</dbReference>
<dbReference type="Ensembl" id="ENST00000677864.1">
    <molecule id="P07711-3"/>
    <property type="protein sequence ID" value="ENSP00000503881.1"/>
    <property type="gene ID" value="ENSG00000135047.16"/>
</dbReference>
<dbReference type="Ensembl" id="ENST00000678442.1">
    <molecule id="P07711-1"/>
    <property type="protein sequence ID" value="ENSP00000503897.1"/>
    <property type="gene ID" value="ENSG00000135047.16"/>
</dbReference>
<dbReference type="Ensembl" id="ENST00000679149.1">
    <molecule id="P07711-1"/>
    <property type="protein sequence ID" value="ENSP00000504313.1"/>
    <property type="gene ID" value="ENSG00000135047.16"/>
</dbReference>
<dbReference type="Ensembl" id="ENST00000679157.1">
    <molecule id="P07711-1"/>
    <property type="protein sequence ID" value="ENSP00000502968.1"/>
    <property type="gene ID" value="ENSG00000135047.16"/>
</dbReference>
<dbReference type="GeneID" id="1514"/>
<dbReference type="KEGG" id="hsa:1514"/>
<dbReference type="MANE-Select" id="ENST00000343150.10">
    <property type="protein sequence ID" value="ENSP00000345344.5"/>
    <property type="RefSeq nucleotide sequence ID" value="NM_001912.5"/>
    <property type="RefSeq protein sequence ID" value="NP_001903.1"/>
</dbReference>
<dbReference type="UCSC" id="uc004aph.4">
    <molecule id="P07711-1"/>
    <property type="organism name" value="human"/>
</dbReference>
<dbReference type="AGR" id="HGNC:2537"/>
<dbReference type="CTD" id="1514"/>
<dbReference type="DisGeNET" id="1514"/>
<dbReference type="GeneCards" id="CTSL"/>
<dbReference type="HGNC" id="HGNC:2537">
    <property type="gene designation" value="CTSL"/>
</dbReference>
<dbReference type="HPA" id="ENSG00000135047">
    <property type="expression patterns" value="Tissue enhanced (placenta)"/>
</dbReference>
<dbReference type="MIM" id="116880">
    <property type="type" value="gene"/>
</dbReference>
<dbReference type="neXtProt" id="NX_P07711"/>
<dbReference type="OpenTargets" id="ENSG00000135047"/>
<dbReference type="PharmGKB" id="PA162382890"/>
<dbReference type="VEuPathDB" id="HostDB:ENSG00000135047"/>
<dbReference type="eggNOG" id="KOG1543">
    <property type="taxonomic scope" value="Eukaryota"/>
</dbReference>
<dbReference type="GeneTree" id="ENSGT00940000154367"/>
<dbReference type="HOGENOM" id="CLU_012184_1_2_1"/>
<dbReference type="InParanoid" id="P07711"/>
<dbReference type="OMA" id="VYYDEEC"/>
<dbReference type="OrthoDB" id="10253408at2759"/>
<dbReference type="PAN-GO" id="P07711">
    <property type="GO annotations" value="5 GO annotations based on evolutionary models"/>
</dbReference>
<dbReference type="PhylomeDB" id="P07711"/>
<dbReference type="TreeFam" id="TF313739"/>
<dbReference type="BRENDA" id="3.4.22.15">
    <property type="organism ID" value="2681"/>
</dbReference>
<dbReference type="BRENDA" id="3.4.22.43">
    <property type="organism ID" value="2681"/>
</dbReference>
<dbReference type="BRENDA" id="3.4.22.B49">
    <property type="organism ID" value="2681"/>
</dbReference>
<dbReference type="PathwayCommons" id="P07711"/>
<dbReference type="Reactome" id="R-HSA-1236977">
    <property type="pathway name" value="Endosomal/Vacuolar pathway"/>
</dbReference>
<dbReference type="Reactome" id="R-HSA-1442490">
    <property type="pathway name" value="Collagen degradation"/>
</dbReference>
<dbReference type="Reactome" id="R-HSA-1474228">
    <property type="pathway name" value="Degradation of the extracellular matrix"/>
</dbReference>
<dbReference type="Reactome" id="R-HSA-1679131">
    <property type="pathway name" value="Trafficking and processing of endosomal TLR"/>
</dbReference>
<dbReference type="Reactome" id="R-HSA-2022090">
    <property type="pathway name" value="Assembly of collagen fibrils and other multimeric structures"/>
</dbReference>
<dbReference type="Reactome" id="R-HSA-2132295">
    <property type="pathway name" value="MHC class II antigen presentation"/>
</dbReference>
<dbReference type="Reactome" id="R-HSA-8939242">
    <property type="pathway name" value="RUNX1 regulates transcription of genes involved in differentiation of keratinocytes"/>
</dbReference>
<dbReference type="Reactome" id="R-HSA-9678110">
    <property type="pathway name" value="Attachment and Entry"/>
</dbReference>
<dbReference type="Reactome" id="R-HSA-9694614">
    <property type="pathway name" value="Attachment and Entry"/>
</dbReference>
<dbReference type="SignaLink" id="P07711"/>
<dbReference type="SIGNOR" id="P07711"/>
<dbReference type="BioGRID-ORCS" id="1514">
    <property type="hits" value="28 hits in 1168 CRISPR screens"/>
</dbReference>
<dbReference type="ChiTaRS" id="CTSL">
    <property type="organism name" value="human"/>
</dbReference>
<dbReference type="EvolutionaryTrace" id="P07711"/>
<dbReference type="GeneWiki" id="Cathepsin_L1"/>
<dbReference type="GenomeRNAi" id="1514"/>
<dbReference type="Pharos" id="P07711">
    <property type="development level" value="Tclin"/>
</dbReference>
<dbReference type="PRO" id="PR:P07711"/>
<dbReference type="Proteomes" id="UP000005640">
    <property type="component" value="Chromosome 9"/>
</dbReference>
<dbReference type="RNAct" id="P07711">
    <property type="molecule type" value="protein"/>
</dbReference>
<dbReference type="Bgee" id="ENSG00000135047">
    <property type="expression patterns" value="Expressed in stromal cell of endometrium and 214 other cell types or tissues"/>
</dbReference>
<dbReference type="ExpressionAtlas" id="P07711">
    <property type="expression patterns" value="baseline and differential"/>
</dbReference>
<dbReference type="GO" id="GO:0016324">
    <property type="term" value="C:apical plasma membrane"/>
    <property type="evidence" value="ECO:0007669"/>
    <property type="project" value="UniProtKB-SubCell"/>
</dbReference>
<dbReference type="GO" id="GO:0042583">
    <property type="term" value="C:chromaffin granule"/>
    <property type="evidence" value="ECO:0000250"/>
    <property type="project" value="UniProtKB"/>
</dbReference>
<dbReference type="GO" id="GO:0062023">
    <property type="term" value="C:collagen-containing extracellular matrix"/>
    <property type="evidence" value="ECO:0007005"/>
    <property type="project" value="BHF-UCL"/>
</dbReference>
<dbReference type="GO" id="GO:0071682">
    <property type="term" value="C:endocytic vesicle lumen"/>
    <property type="evidence" value="ECO:0000304"/>
    <property type="project" value="Reactome"/>
</dbReference>
<dbReference type="GO" id="GO:0036021">
    <property type="term" value="C:endolysosome lumen"/>
    <property type="evidence" value="ECO:0000304"/>
    <property type="project" value="Reactome"/>
</dbReference>
<dbReference type="GO" id="GO:0070062">
    <property type="term" value="C:extracellular exosome"/>
    <property type="evidence" value="ECO:0007005"/>
    <property type="project" value="UniProtKB"/>
</dbReference>
<dbReference type="GO" id="GO:0005576">
    <property type="term" value="C:extracellular region"/>
    <property type="evidence" value="ECO:0000304"/>
    <property type="project" value="Reactome"/>
</dbReference>
<dbReference type="GO" id="GO:0005615">
    <property type="term" value="C:extracellular space"/>
    <property type="evidence" value="ECO:0000314"/>
    <property type="project" value="BHF-UCL"/>
</dbReference>
<dbReference type="GO" id="GO:0005794">
    <property type="term" value="C:Golgi apparatus"/>
    <property type="evidence" value="ECO:0000314"/>
    <property type="project" value="HPA"/>
</dbReference>
<dbReference type="GO" id="GO:0043231">
    <property type="term" value="C:intracellular membrane-bounded organelle"/>
    <property type="evidence" value="ECO:0000314"/>
    <property type="project" value="HPA"/>
</dbReference>
<dbReference type="GO" id="GO:0043202">
    <property type="term" value="C:lysosomal lumen"/>
    <property type="evidence" value="ECO:0000304"/>
    <property type="project" value="Reactome"/>
</dbReference>
<dbReference type="GO" id="GO:0005764">
    <property type="term" value="C:lysosome"/>
    <property type="evidence" value="ECO:0000314"/>
    <property type="project" value="UniProtKB"/>
</dbReference>
<dbReference type="GO" id="GO:0005771">
    <property type="term" value="C:multivesicular body"/>
    <property type="evidence" value="ECO:0000314"/>
    <property type="project" value="ARUK-UCL"/>
</dbReference>
<dbReference type="GO" id="GO:0005634">
    <property type="term" value="C:nucleus"/>
    <property type="evidence" value="ECO:0000304"/>
    <property type="project" value="BHF-UCL"/>
</dbReference>
<dbReference type="GO" id="GO:0005886">
    <property type="term" value="C:plasma membrane"/>
    <property type="evidence" value="ECO:0000314"/>
    <property type="project" value="ARUK-UCL"/>
</dbReference>
<dbReference type="GO" id="GO:0005518">
    <property type="term" value="F:collagen binding"/>
    <property type="evidence" value="ECO:0000314"/>
    <property type="project" value="BHF-UCL"/>
</dbReference>
<dbReference type="GO" id="GO:0004197">
    <property type="term" value="F:cysteine-type endopeptidase activity"/>
    <property type="evidence" value="ECO:0000314"/>
    <property type="project" value="UniProtKB"/>
</dbReference>
<dbReference type="GO" id="GO:0008234">
    <property type="term" value="F:cysteine-type peptidase activity"/>
    <property type="evidence" value="ECO:0000314"/>
    <property type="project" value="UniProtKB"/>
</dbReference>
<dbReference type="GO" id="GO:0001968">
    <property type="term" value="F:fibronectin binding"/>
    <property type="evidence" value="ECO:0000353"/>
    <property type="project" value="BHF-UCL"/>
</dbReference>
<dbReference type="GO" id="GO:0042393">
    <property type="term" value="F:histone binding"/>
    <property type="evidence" value="ECO:0000314"/>
    <property type="project" value="BHF-UCL"/>
</dbReference>
<dbReference type="GO" id="GO:0043394">
    <property type="term" value="F:proteoglycan binding"/>
    <property type="evidence" value="ECO:0000353"/>
    <property type="project" value="BHF-UCL"/>
</dbReference>
<dbReference type="GO" id="GO:0097655">
    <property type="term" value="F:serpin family protein binding"/>
    <property type="evidence" value="ECO:0000353"/>
    <property type="project" value="UniProtKB"/>
</dbReference>
<dbReference type="GO" id="GO:0002250">
    <property type="term" value="P:adaptive immune response"/>
    <property type="evidence" value="ECO:0000270"/>
    <property type="project" value="UniProtKB"/>
</dbReference>
<dbReference type="GO" id="GO:0019882">
    <property type="term" value="P:antigen processing and presentation"/>
    <property type="evidence" value="ECO:0000304"/>
    <property type="project" value="UniProtKB"/>
</dbReference>
<dbReference type="GO" id="GO:0019886">
    <property type="term" value="P:antigen processing and presentation of exogenous peptide antigen via MHC class II"/>
    <property type="evidence" value="ECO:0000304"/>
    <property type="project" value="Reactome"/>
</dbReference>
<dbReference type="GO" id="GO:0048002">
    <property type="term" value="P:antigen processing and presentation of peptide antigen"/>
    <property type="evidence" value="ECO:0000250"/>
    <property type="project" value="UniProtKB"/>
</dbReference>
<dbReference type="GO" id="GO:0043373">
    <property type="term" value="P:CD4-positive, alpha-beta T cell lineage commitment"/>
    <property type="evidence" value="ECO:0000250"/>
    <property type="project" value="UniProtKB"/>
</dbReference>
<dbReference type="GO" id="GO:0097067">
    <property type="term" value="P:cellular response to thyroid hormone stimulus"/>
    <property type="evidence" value="ECO:0000270"/>
    <property type="project" value="UniProtKB"/>
</dbReference>
<dbReference type="GO" id="GO:0030574">
    <property type="term" value="P:collagen catabolic process"/>
    <property type="evidence" value="ECO:0000314"/>
    <property type="project" value="UniProtKB"/>
</dbReference>
<dbReference type="GO" id="GO:0060309">
    <property type="term" value="P:elastin catabolic process"/>
    <property type="evidence" value="ECO:0000250"/>
    <property type="project" value="UniProtKB"/>
</dbReference>
<dbReference type="GO" id="GO:0034230">
    <property type="term" value="P:enkephalin processing"/>
    <property type="evidence" value="ECO:0000250"/>
    <property type="project" value="UniProtKB"/>
</dbReference>
<dbReference type="GO" id="GO:0039654">
    <property type="term" value="P:fusion of virus membrane with host endosome membrane"/>
    <property type="evidence" value="ECO:0000314"/>
    <property type="project" value="UniProtKB"/>
</dbReference>
<dbReference type="GO" id="GO:0019064">
    <property type="term" value="P:fusion of virus membrane with host plasma membrane"/>
    <property type="evidence" value="ECO:0000314"/>
    <property type="project" value="UniProtKB"/>
</dbReference>
<dbReference type="GO" id="GO:0071888">
    <property type="term" value="P:macrophage apoptotic process"/>
    <property type="evidence" value="ECO:0000303"/>
    <property type="project" value="BHF-UCL"/>
</dbReference>
<dbReference type="GO" id="GO:0016540">
    <property type="term" value="P:protein autoprocessing"/>
    <property type="evidence" value="ECO:0000314"/>
    <property type="project" value="UniProtKB"/>
</dbReference>
<dbReference type="GO" id="GO:0006508">
    <property type="term" value="P:proteolysis"/>
    <property type="evidence" value="ECO:0000314"/>
    <property type="project" value="UniProtKB"/>
</dbReference>
<dbReference type="GO" id="GO:0051603">
    <property type="term" value="P:proteolysis involved in protein catabolic process"/>
    <property type="evidence" value="ECO:0000314"/>
    <property type="project" value="BHF-UCL"/>
</dbReference>
<dbReference type="GO" id="GO:0019065">
    <property type="term" value="P:receptor-mediated endocytosis of virus by host cell"/>
    <property type="evidence" value="ECO:0000314"/>
    <property type="project" value="UniProtKB"/>
</dbReference>
<dbReference type="GO" id="GO:0046718">
    <property type="term" value="P:symbiont entry into host cell"/>
    <property type="evidence" value="ECO:0000314"/>
    <property type="project" value="UniProtKB"/>
</dbReference>
<dbReference type="GO" id="GO:0031638">
    <property type="term" value="P:zymogen activation"/>
    <property type="evidence" value="ECO:0000314"/>
    <property type="project" value="UniProtKB"/>
</dbReference>
<dbReference type="CDD" id="cd02248">
    <property type="entry name" value="Peptidase_C1A"/>
    <property type="match status" value="1"/>
</dbReference>
<dbReference type="FunFam" id="3.90.70.10:FF:000332">
    <property type="entry name" value="Cathepsin L1"/>
    <property type="match status" value="1"/>
</dbReference>
<dbReference type="Gene3D" id="3.90.70.10">
    <property type="entry name" value="Cysteine proteinases"/>
    <property type="match status" value="1"/>
</dbReference>
<dbReference type="InterPro" id="IPR038765">
    <property type="entry name" value="Papain-like_cys_pep_sf"/>
</dbReference>
<dbReference type="InterPro" id="IPR025661">
    <property type="entry name" value="Pept_asp_AS"/>
</dbReference>
<dbReference type="InterPro" id="IPR000169">
    <property type="entry name" value="Pept_cys_AS"/>
</dbReference>
<dbReference type="InterPro" id="IPR025660">
    <property type="entry name" value="Pept_his_AS"/>
</dbReference>
<dbReference type="InterPro" id="IPR013128">
    <property type="entry name" value="Peptidase_C1A"/>
</dbReference>
<dbReference type="InterPro" id="IPR000668">
    <property type="entry name" value="Peptidase_C1A_C"/>
</dbReference>
<dbReference type="InterPro" id="IPR039417">
    <property type="entry name" value="Peptidase_C1A_papain-like"/>
</dbReference>
<dbReference type="InterPro" id="IPR013201">
    <property type="entry name" value="Prot_inhib_I29"/>
</dbReference>
<dbReference type="PANTHER" id="PTHR12411">
    <property type="entry name" value="CYSTEINE PROTEASE FAMILY C1-RELATED"/>
    <property type="match status" value="1"/>
</dbReference>
<dbReference type="Pfam" id="PF08246">
    <property type="entry name" value="Inhibitor_I29"/>
    <property type="match status" value="1"/>
</dbReference>
<dbReference type="Pfam" id="PF00112">
    <property type="entry name" value="Peptidase_C1"/>
    <property type="match status" value="1"/>
</dbReference>
<dbReference type="PRINTS" id="PR00705">
    <property type="entry name" value="PAPAIN"/>
</dbReference>
<dbReference type="SMART" id="SM00848">
    <property type="entry name" value="Inhibitor_I29"/>
    <property type="match status" value="1"/>
</dbReference>
<dbReference type="SMART" id="SM00645">
    <property type="entry name" value="Pept_C1"/>
    <property type="match status" value="1"/>
</dbReference>
<dbReference type="SUPFAM" id="SSF54001">
    <property type="entry name" value="Cysteine proteinases"/>
    <property type="match status" value="1"/>
</dbReference>
<dbReference type="PROSITE" id="PS00640">
    <property type="entry name" value="THIOL_PROTEASE_ASN"/>
    <property type="match status" value="1"/>
</dbReference>
<dbReference type="PROSITE" id="PS00139">
    <property type="entry name" value="THIOL_PROTEASE_CYS"/>
    <property type="match status" value="1"/>
</dbReference>
<dbReference type="PROSITE" id="PS00639">
    <property type="entry name" value="THIOL_PROTEASE_HIS"/>
    <property type="match status" value="1"/>
</dbReference>
<organism>
    <name type="scientific">Homo sapiens</name>
    <name type="common">Human</name>
    <dbReference type="NCBI Taxonomy" id="9606"/>
    <lineage>
        <taxon>Eukaryota</taxon>
        <taxon>Metazoa</taxon>
        <taxon>Chordata</taxon>
        <taxon>Craniata</taxon>
        <taxon>Vertebrata</taxon>
        <taxon>Euteleostomi</taxon>
        <taxon>Mammalia</taxon>
        <taxon>Eutheria</taxon>
        <taxon>Euarchontoglires</taxon>
        <taxon>Primates</taxon>
        <taxon>Haplorrhini</taxon>
        <taxon>Catarrhini</taxon>
        <taxon>Hominidae</taxon>
        <taxon>Homo</taxon>
    </lineage>
</organism>
<evidence type="ECO:0000250" key="1">
    <source>
        <dbReference type="UniProtKB" id="P06797"/>
    </source>
</evidence>
<evidence type="ECO:0000250" key="2">
    <source>
        <dbReference type="UniProtKB" id="P07154"/>
    </source>
</evidence>
<evidence type="ECO:0000250" key="3">
    <source>
        <dbReference type="UniProtKB" id="P25975"/>
    </source>
</evidence>
<evidence type="ECO:0000255" key="4">
    <source>
        <dbReference type="PROSITE-ProRule" id="PRU10088"/>
    </source>
</evidence>
<evidence type="ECO:0000255" key="5">
    <source>
        <dbReference type="PROSITE-ProRule" id="PRU10089"/>
    </source>
</evidence>
<evidence type="ECO:0000255" key="6">
    <source>
        <dbReference type="PROSITE-ProRule" id="PRU10090"/>
    </source>
</evidence>
<evidence type="ECO:0000269" key="7">
    <source>
    </source>
</evidence>
<evidence type="ECO:0000269" key="8">
    <source>
    </source>
</evidence>
<evidence type="ECO:0000269" key="9">
    <source>
    </source>
</evidence>
<evidence type="ECO:0000269" key="10">
    <source>
    </source>
</evidence>
<evidence type="ECO:0000269" key="11">
    <source>
    </source>
</evidence>
<evidence type="ECO:0000269" key="12">
    <source>
    </source>
</evidence>
<evidence type="ECO:0000269" key="13">
    <source>
    </source>
</evidence>
<evidence type="ECO:0000269" key="14">
    <source>
    </source>
</evidence>
<evidence type="ECO:0000269" key="15">
    <source>
    </source>
</evidence>
<evidence type="ECO:0000269" key="16">
    <source>
    </source>
</evidence>
<evidence type="ECO:0000269" key="17">
    <source>
    </source>
</evidence>
<evidence type="ECO:0000269" key="18">
    <source>
    </source>
</evidence>
<evidence type="ECO:0000269" key="19">
    <source>
    </source>
</evidence>
<evidence type="ECO:0000269" key="20">
    <source>
    </source>
</evidence>
<evidence type="ECO:0000269" key="21">
    <source>
    </source>
</evidence>
<evidence type="ECO:0000269" key="22">
    <source>
    </source>
</evidence>
<evidence type="ECO:0000269" key="23">
    <source>
    </source>
</evidence>
<evidence type="ECO:0000269" key="24">
    <source>
    </source>
</evidence>
<evidence type="ECO:0000305" key="25"/>
<evidence type="ECO:0000305" key="26">
    <source>
    </source>
</evidence>
<evidence type="ECO:0000312" key="27">
    <source>
        <dbReference type="HGNC" id="HGNC:2537"/>
    </source>
</evidence>
<evidence type="ECO:0007744" key="28">
    <source>
        <dbReference type="PDB" id="1CJL"/>
    </source>
</evidence>
<evidence type="ECO:0007744" key="29">
    <source>
        <dbReference type="PDB" id="1CS8"/>
    </source>
</evidence>
<evidence type="ECO:0007744" key="30">
    <source>
        <dbReference type="PDB" id="8HET"/>
    </source>
</evidence>
<evidence type="ECO:0007744" key="31">
    <source>
        <dbReference type="PDB" id="8HFV"/>
    </source>
</evidence>
<evidence type="ECO:0007829" key="32">
    <source>
        <dbReference type="PDB" id="2XU3"/>
    </source>
</evidence>
<evidence type="ECO:0007829" key="33">
    <source>
        <dbReference type="PDB" id="2XU4"/>
    </source>
</evidence>
<evidence type="ECO:0007829" key="34">
    <source>
        <dbReference type="PDB" id="4AXL"/>
    </source>
</evidence>
<evidence type="ECO:0007829" key="35">
    <source>
        <dbReference type="PDB" id="6EZP"/>
    </source>
</evidence>
<evidence type="ECO:0007829" key="36">
    <source>
        <dbReference type="PDB" id="6EZX"/>
    </source>
</evidence>
<evidence type="ECO:0007829" key="37">
    <source>
        <dbReference type="PDB" id="6JD8"/>
    </source>
</evidence>
<evidence type="ECO:0007829" key="38">
    <source>
        <dbReference type="PDB" id="7W34"/>
    </source>
</evidence>